<proteinExistence type="inferred from homology"/>
<feature type="chain" id="PRO_1000068201" description="Large ribosomal subunit protein uL30">
    <location>
        <begin position="1"/>
        <end position="59"/>
    </location>
</feature>
<gene>
    <name evidence="1" type="primary">rpmD</name>
    <name type="ordered locus">YpsIP31758_3896</name>
</gene>
<comment type="subunit">
    <text evidence="1">Part of the 50S ribosomal subunit.</text>
</comment>
<comment type="similarity">
    <text evidence="1">Belongs to the universal ribosomal protein uL30 family.</text>
</comment>
<sequence>MAKTIKVTQTKSSIGRLPKHKATLIGLGLRRIGHTVEREDTPAVRGMVNLVSYMVKVEE</sequence>
<evidence type="ECO:0000255" key="1">
    <source>
        <dbReference type="HAMAP-Rule" id="MF_01371"/>
    </source>
</evidence>
<evidence type="ECO:0000305" key="2"/>
<organism>
    <name type="scientific">Yersinia pseudotuberculosis serotype O:1b (strain IP 31758)</name>
    <dbReference type="NCBI Taxonomy" id="349747"/>
    <lineage>
        <taxon>Bacteria</taxon>
        <taxon>Pseudomonadati</taxon>
        <taxon>Pseudomonadota</taxon>
        <taxon>Gammaproteobacteria</taxon>
        <taxon>Enterobacterales</taxon>
        <taxon>Yersiniaceae</taxon>
        <taxon>Yersinia</taxon>
    </lineage>
</organism>
<reference key="1">
    <citation type="journal article" date="2007" name="PLoS Genet.">
        <title>The complete genome sequence of Yersinia pseudotuberculosis IP31758, the causative agent of Far East scarlet-like fever.</title>
        <authorList>
            <person name="Eppinger M."/>
            <person name="Rosovitz M.J."/>
            <person name="Fricke W.F."/>
            <person name="Rasko D.A."/>
            <person name="Kokorina G."/>
            <person name="Fayolle C."/>
            <person name="Lindler L.E."/>
            <person name="Carniel E."/>
            <person name="Ravel J."/>
        </authorList>
    </citation>
    <scope>NUCLEOTIDE SEQUENCE [LARGE SCALE GENOMIC DNA]</scope>
    <source>
        <strain>IP 31758</strain>
    </source>
</reference>
<protein>
    <recommendedName>
        <fullName evidence="1">Large ribosomal subunit protein uL30</fullName>
    </recommendedName>
    <alternativeName>
        <fullName evidence="2">50S ribosomal protein L30</fullName>
    </alternativeName>
</protein>
<keyword id="KW-0687">Ribonucleoprotein</keyword>
<keyword id="KW-0689">Ribosomal protein</keyword>
<dbReference type="EMBL" id="CP000720">
    <property type="protein sequence ID" value="ABS49372.1"/>
    <property type="molecule type" value="Genomic_DNA"/>
</dbReference>
<dbReference type="RefSeq" id="WP_002213339.1">
    <property type="nucleotide sequence ID" value="NC_009708.1"/>
</dbReference>
<dbReference type="SMR" id="A7FNL6"/>
<dbReference type="GeneID" id="97454249"/>
<dbReference type="KEGG" id="ypi:YpsIP31758_3896"/>
<dbReference type="HOGENOM" id="CLU_131047_1_4_6"/>
<dbReference type="Proteomes" id="UP000002412">
    <property type="component" value="Chromosome"/>
</dbReference>
<dbReference type="GO" id="GO:0022625">
    <property type="term" value="C:cytosolic large ribosomal subunit"/>
    <property type="evidence" value="ECO:0007669"/>
    <property type="project" value="TreeGrafter"/>
</dbReference>
<dbReference type="GO" id="GO:0003735">
    <property type="term" value="F:structural constituent of ribosome"/>
    <property type="evidence" value="ECO:0007669"/>
    <property type="project" value="InterPro"/>
</dbReference>
<dbReference type="GO" id="GO:0006412">
    <property type="term" value="P:translation"/>
    <property type="evidence" value="ECO:0007669"/>
    <property type="project" value="UniProtKB-UniRule"/>
</dbReference>
<dbReference type="CDD" id="cd01658">
    <property type="entry name" value="Ribosomal_L30"/>
    <property type="match status" value="1"/>
</dbReference>
<dbReference type="FunFam" id="3.30.1390.20:FF:000001">
    <property type="entry name" value="50S ribosomal protein L30"/>
    <property type="match status" value="1"/>
</dbReference>
<dbReference type="Gene3D" id="3.30.1390.20">
    <property type="entry name" value="Ribosomal protein L30, ferredoxin-like fold domain"/>
    <property type="match status" value="1"/>
</dbReference>
<dbReference type="HAMAP" id="MF_01371_B">
    <property type="entry name" value="Ribosomal_uL30_B"/>
    <property type="match status" value="1"/>
</dbReference>
<dbReference type="InterPro" id="IPR036919">
    <property type="entry name" value="Ribo_uL30_ferredoxin-like_sf"/>
</dbReference>
<dbReference type="InterPro" id="IPR005996">
    <property type="entry name" value="Ribosomal_uL30_bac-type"/>
</dbReference>
<dbReference type="InterPro" id="IPR018038">
    <property type="entry name" value="Ribosomal_uL30_CS"/>
</dbReference>
<dbReference type="InterPro" id="IPR016082">
    <property type="entry name" value="Ribosomal_uL30_ferredoxin-like"/>
</dbReference>
<dbReference type="NCBIfam" id="TIGR01308">
    <property type="entry name" value="rpmD_bact"/>
    <property type="match status" value="1"/>
</dbReference>
<dbReference type="PANTHER" id="PTHR15892:SF2">
    <property type="entry name" value="LARGE RIBOSOMAL SUBUNIT PROTEIN UL30M"/>
    <property type="match status" value="1"/>
</dbReference>
<dbReference type="PANTHER" id="PTHR15892">
    <property type="entry name" value="MITOCHONDRIAL RIBOSOMAL PROTEIN L30"/>
    <property type="match status" value="1"/>
</dbReference>
<dbReference type="Pfam" id="PF00327">
    <property type="entry name" value="Ribosomal_L30"/>
    <property type="match status" value="1"/>
</dbReference>
<dbReference type="PIRSF" id="PIRSF002211">
    <property type="entry name" value="Ribosomal_L30_bac-type"/>
    <property type="match status" value="1"/>
</dbReference>
<dbReference type="SUPFAM" id="SSF55129">
    <property type="entry name" value="Ribosomal protein L30p/L7e"/>
    <property type="match status" value="1"/>
</dbReference>
<dbReference type="PROSITE" id="PS00634">
    <property type="entry name" value="RIBOSOMAL_L30"/>
    <property type="match status" value="1"/>
</dbReference>
<name>RL30_YERP3</name>
<accession>A7FNL6</accession>